<keyword id="KW-0687">Ribonucleoprotein</keyword>
<keyword id="KW-0689">Ribosomal protein</keyword>
<keyword id="KW-0694">RNA-binding</keyword>
<keyword id="KW-0699">rRNA-binding</keyword>
<gene>
    <name evidence="1" type="primary">rplI</name>
    <name type="ordered locus">Dhaf_4931</name>
</gene>
<organism>
    <name type="scientific">Desulfitobacterium hafniense (strain DSM 10664 / DCB-2)</name>
    <dbReference type="NCBI Taxonomy" id="272564"/>
    <lineage>
        <taxon>Bacteria</taxon>
        <taxon>Bacillati</taxon>
        <taxon>Bacillota</taxon>
        <taxon>Clostridia</taxon>
        <taxon>Eubacteriales</taxon>
        <taxon>Desulfitobacteriaceae</taxon>
        <taxon>Desulfitobacterium</taxon>
    </lineage>
</organism>
<protein>
    <recommendedName>
        <fullName evidence="1">Large ribosomal subunit protein bL9</fullName>
    </recommendedName>
    <alternativeName>
        <fullName evidence="2">50S ribosomal protein L9</fullName>
    </alternativeName>
</protein>
<accession>B8G0I9</accession>
<comment type="function">
    <text evidence="1">Binds to the 23S rRNA.</text>
</comment>
<comment type="similarity">
    <text evidence="1">Belongs to the bacterial ribosomal protein bL9 family.</text>
</comment>
<evidence type="ECO:0000255" key="1">
    <source>
        <dbReference type="HAMAP-Rule" id="MF_00503"/>
    </source>
</evidence>
<evidence type="ECO:0000305" key="2"/>
<sequence>MKVILKADVKALGKKGQVYEVSDGYARNFLFPKGLAVEATSGNLNDLASKKANEEKKKEQEKQEAQTLAAKLSSLSIEIHTKSGEGGRLFGSVTNKEIAEALKASHGINLDRRKLELKEPIKALGTFNVQAKLHPEVTAQFQVHVKAS</sequence>
<reference key="1">
    <citation type="journal article" date="2012" name="BMC Microbiol.">
        <title>Genome sequence of Desulfitobacterium hafniense DCB-2, a Gram-positive anaerobe capable of dehalogenation and metal reduction.</title>
        <authorList>
            <person name="Kim S.H."/>
            <person name="Harzman C."/>
            <person name="Davis J.K."/>
            <person name="Hutcheson R."/>
            <person name="Broderick J.B."/>
            <person name="Marsh T.L."/>
            <person name="Tiedje J.M."/>
        </authorList>
    </citation>
    <scope>NUCLEOTIDE SEQUENCE [LARGE SCALE GENOMIC DNA]</scope>
    <source>
        <strain>DSM 10664 / DCB-2</strain>
    </source>
</reference>
<feature type="chain" id="PRO_1000196240" description="Large ribosomal subunit protein bL9">
    <location>
        <begin position="1"/>
        <end position="148"/>
    </location>
</feature>
<name>RL9_DESHD</name>
<proteinExistence type="inferred from homology"/>
<dbReference type="EMBL" id="CP001336">
    <property type="protein sequence ID" value="ACL22925.1"/>
    <property type="molecule type" value="Genomic_DNA"/>
</dbReference>
<dbReference type="RefSeq" id="WP_005815187.1">
    <property type="nucleotide sequence ID" value="NC_011830.1"/>
</dbReference>
<dbReference type="SMR" id="B8G0I9"/>
<dbReference type="KEGG" id="dhd:Dhaf_4931"/>
<dbReference type="HOGENOM" id="CLU_078938_3_0_9"/>
<dbReference type="Proteomes" id="UP000007726">
    <property type="component" value="Chromosome"/>
</dbReference>
<dbReference type="GO" id="GO:1990904">
    <property type="term" value="C:ribonucleoprotein complex"/>
    <property type="evidence" value="ECO:0007669"/>
    <property type="project" value="UniProtKB-KW"/>
</dbReference>
<dbReference type="GO" id="GO:0005840">
    <property type="term" value="C:ribosome"/>
    <property type="evidence" value="ECO:0007669"/>
    <property type="project" value="UniProtKB-KW"/>
</dbReference>
<dbReference type="GO" id="GO:0019843">
    <property type="term" value="F:rRNA binding"/>
    <property type="evidence" value="ECO:0007669"/>
    <property type="project" value="UniProtKB-UniRule"/>
</dbReference>
<dbReference type="GO" id="GO:0003735">
    <property type="term" value="F:structural constituent of ribosome"/>
    <property type="evidence" value="ECO:0007669"/>
    <property type="project" value="InterPro"/>
</dbReference>
<dbReference type="GO" id="GO:0006412">
    <property type="term" value="P:translation"/>
    <property type="evidence" value="ECO:0007669"/>
    <property type="project" value="UniProtKB-UniRule"/>
</dbReference>
<dbReference type="FunFam" id="3.10.430.100:FF:000002">
    <property type="entry name" value="50S ribosomal protein L9"/>
    <property type="match status" value="1"/>
</dbReference>
<dbReference type="FunFam" id="3.40.5.10:FF:000002">
    <property type="entry name" value="50S ribosomal protein L9"/>
    <property type="match status" value="1"/>
</dbReference>
<dbReference type="Gene3D" id="3.10.430.100">
    <property type="entry name" value="Ribosomal protein L9, C-terminal domain"/>
    <property type="match status" value="1"/>
</dbReference>
<dbReference type="Gene3D" id="3.40.5.10">
    <property type="entry name" value="Ribosomal protein L9, N-terminal domain"/>
    <property type="match status" value="1"/>
</dbReference>
<dbReference type="HAMAP" id="MF_00503">
    <property type="entry name" value="Ribosomal_bL9"/>
    <property type="match status" value="1"/>
</dbReference>
<dbReference type="InterPro" id="IPR000244">
    <property type="entry name" value="Ribosomal_bL9"/>
</dbReference>
<dbReference type="InterPro" id="IPR009027">
    <property type="entry name" value="Ribosomal_bL9/RNase_H1_N"/>
</dbReference>
<dbReference type="InterPro" id="IPR020594">
    <property type="entry name" value="Ribosomal_bL9_bac/chp"/>
</dbReference>
<dbReference type="InterPro" id="IPR020069">
    <property type="entry name" value="Ribosomal_bL9_C"/>
</dbReference>
<dbReference type="InterPro" id="IPR036791">
    <property type="entry name" value="Ribosomal_bL9_C_sf"/>
</dbReference>
<dbReference type="InterPro" id="IPR020070">
    <property type="entry name" value="Ribosomal_bL9_N"/>
</dbReference>
<dbReference type="InterPro" id="IPR036935">
    <property type="entry name" value="Ribosomal_bL9_N_sf"/>
</dbReference>
<dbReference type="NCBIfam" id="TIGR00158">
    <property type="entry name" value="L9"/>
    <property type="match status" value="1"/>
</dbReference>
<dbReference type="PANTHER" id="PTHR21368">
    <property type="entry name" value="50S RIBOSOMAL PROTEIN L9"/>
    <property type="match status" value="1"/>
</dbReference>
<dbReference type="Pfam" id="PF03948">
    <property type="entry name" value="Ribosomal_L9_C"/>
    <property type="match status" value="1"/>
</dbReference>
<dbReference type="Pfam" id="PF01281">
    <property type="entry name" value="Ribosomal_L9_N"/>
    <property type="match status" value="1"/>
</dbReference>
<dbReference type="SUPFAM" id="SSF55658">
    <property type="entry name" value="L9 N-domain-like"/>
    <property type="match status" value="1"/>
</dbReference>
<dbReference type="SUPFAM" id="SSF55653">
    <property type="entry name" value="Ribosomal protein L9 C-domain"/>
    <property type="match status" value="1"/>
</dbReference>
<dbReference type="PROSITE" id="PS00651">
    <property type="entry name" value="RIBOSOMAL_L9"/>
    <property type="match status" value="1"/>
</dbReference>